<organism>
    <name type="scientific">Streptococcus agalactiae serotype III (strain NEM316)</name>
    <dbReference type="NCBI Taxonomy" id="211110"/>
    <lineage>
        <taxon>Bacteria</taxon>
        <taxon>Bacillati</taxon>
        <taxon>Bacillota</taxon>
        <taxon>Bacilli</taxon>
        <taxon>Lactobacillales</taxon>
        <taxon>Streptococcaceae</taxon>
        <taxon>Streptococcus</taxon>
    </lineage>
</organism>
<feature type="chain" id="PRO_0000158587" description="Probable manganese-dependent inorganic pyrophosphatase">
    <location>
        <begin position="1"/>
        <end position="311"/>
    </location>
</feature>
<feature type="binding site" evidence="1">
    <location>
        <position position="9"/>
    </location>
    <ligand>
        <name>Mn(2+)</name>
        <dbReference type="ChEBI" id="CHEBI:29035"/>
        <label>1</label>
    </ligand>
</feature>
<feature type="binding site" evidence="1">
    <location>
        <position position="13"/>
    </location>
    <ligand>
        <name>Mn(2+)</name>
        <dbReference type="ChEBI" id="CHEBI:29035"/>
        <label>1</label>
    </ligand>
</feature>
<feature type="binding site" evidence="1">
    <location>
        <position position="15"/>
    </location>
    <ligand>
        <name>Mn(2+)</name>
        <dbReference type="ChEBI" id="CHEBI:29035"/>
        <label>2</label>
    </ligand>
</feature>
<feature type="binding site" evidence="1">
    <location>
        <position position="77"/>
    </location>
    <ligand>
        <name>Mn(2+)</name>
        <dbReference type="ChEBI" id="CHEBI:29035"/>
        <label>1</label>
    </ligand>
</feature>
<feature type="binding site" evidence="1">
    <location>
        <position position="77"/>
    </location>
    <ligand>
        <name>Mn(2+)</name>
        <dbReference type="ChEBI" id="CHEBI:29035"/>
        <label>2</label>
    </ligand>
</feature>
<feature type="binding site" evidence="1">
    <location>
        <position position="99"/>
    </location>
    <ligand>
        <name>Mn(2+)</name>
        <dbReference type="ChEBI" id="CHEBI:29035"/>
        <label>2</label>
    </ligand>
</feature>
<feature type="binding site" evidence="1">
    <location>
        <position position="151"/>
    </location>
    <ligand>
        <name>Mn(2+)</name>
        <dbReference type="ChEBI" id="CHEBI:29035"/>
        <label>2</label>
    </ligand>
</feature>
<reference key="1">
    <citation type="journal article" date="2002" name="Mol. Microbiol.">
        <title>Genome sequence of Streptococcus agalactiae, a pathogen causing invasive neonatal disease.</title>
        <authorList>
            <person name="Glaser P."/>
            <person name="Rusniok C."/>
            <person name="Buchrieser C."/>
            <person name="Chevalier F."/>
            <person name="Frangeul L."/>
            <person name="Msadek T."/>
            <person name="Zouine M."/>
            <person name="Couve E."/>
            <person name="Lalioui L."/>
            <person name="Poyart C."/>
            <person name="Trieu-Cuot P."/>
            <person name="Kunst F."/>
        </authorList>
    </citation>
    <scope>NUCLEOTIDE SEQUENCE [LARGE SCALE GENOMIC DNA]</scope>
    <source>
        <strain>NEM316</strain>
    </source>
</reference>
<proteinExistence type="inferred from homology"/>
<keyword id="KW-0963">Cytoplasm</keyword>
<keyword id="KW-0378">Hydrolase</keyword>
<keyword id="KW-0464">Manganese</keyword>
<keyword id="KW-0479">Metal-binding</keyword>
<protein>
    <recommendedName>
        <fullName evidence="1">Probable manganese-dependent inorganic pyrophosphatase</fullName>
        <ecNumber evidence="1">3.6.1.1</ecNumber>
    </recommendedName>
    <alternativeName>
        <fullName evidence="1">Pyrophosphate phospho-hydrolase</fullName>
        <shortName evidence="1">PPase</shortName>
    </alternativeName>
</protein>
<name>PPAC_STRA3</name>
<sequence>MSKILVFGHQNPDSDAIGSSVAFAYLAKEAWGLDTEAVALGTPNEETAYVLDYFGVQAPRVVESAKAEGVETVILTDHNEFQQSISDIKDVTVYGVVDHHRVANFETANPLYMRLEPVGSASSIVYRMFKENGVSVPKELAGLLLSGLISDTLLLKSPTTHASDIPVAKELAEIAGVNLEEYGLEMLKAGTNLSSKTAAELIDIDAKTFELNGEAVRVAQVNTVDINDILARQEEIEVAIQEAIVTEGYSDFVLMITDIVNSNSEILALGSNMAKVEAAFEFTLENNHAFLAGAVSRKKQVVPQLTESYNA</sequence>
<gene>
    <name evidence="1" type="primary">ppaC</name>
    <name type="ordered locus">gbs1467</name>
</gene>
<dbReference type="EC" id="3.6.1.1" evidence="1"/>
<dbReference type="EMBL" id="AL766851">
    <property type="protein sequence ID" value="CAD47126.1"/>
    <property type="molecule type" value="Genomic_DNA"/>
</dbReference>
<dbReference type="RefSeq" id="WP_000036015.1">
    <property type="nucleotide sequence ID" value="NC_004368.1"/>
</dbReference>
<dbReference type="SMR" id="Q8E4D4"/>
<dbReference type="KEGG" id="san:gbs1467"/>
<dbReference type="eggNOG" id="COG1227">
    <property type="taxonomic scope" value="Bacteria"/>
</dbReference>
<dbReference type="HOGENOM" id="CLU_025243_0_1_9"/>
<dbReference type="Proteomes" id="UP000000823">
    <property type="component" value="Chromosome"/>
</dbReference>
<dbReference type="GO" id="GO:0005737">
    <property type="term" value="C:cytoplasm"/>
    <property type="evidence" value="ECO:0007669"/>
    <property type="project" value="UniProtKB-SubCell"/>
</dbReference>
<dbReference type="GO" id="GO:0004427">
    <property type="term" value="F:inorganic diphosphate phosphatase activity"/>
    <property type="evidence" value="ECO:0007669"/>
    <property type="project" value="UniProtKB-UniRule"/>
</dbReference>
<dbReference type="GO" id="GO:0030145">
    <property type="term" value="F:manganese ion binding"/>
    <property type="evidence" value="ECO:0007669"/>
    <property type="project" value="UniProtKB-UniRule"/>
</dbReference>
<dbReference type="FunFam" id="3.10.310.20:FF:000001">
    <property type="entry name" value="Probable manganese-dependent inorganic pyrophosphatase"/>
    <property type="match status" value="1"/>
</dbReference>
<dbReference type="FunFam" id="3.90.1640.10:FF:000001">
    <property type="entry name" value="Probable manganese-dependent inorganic pyrophosphatase"/>
    <property type="match status" value="1"/>
</dbReference>
<dbReference type="Gene3D" id="3.10.310.20">
    <property type="entry name" value="DHHA2 domain"/>
    <property type="match status" value="1"/>
</dbReference>
<dbReference type="Gene3D" id="3.90.1640.10">
    <property type="entry name" value="inorganic pyrophosphatase (n-terminal core)"/>
    <property type="match status" value="1"/>
</dbReference>
<dbReference type="HAMAP" id="MF_00207">
    <property type="entry name" value="PPase_C"/>
    <property type="match status" value="1"/>
</dbReference>
<dbReference type="InterPro" id="IPR001667">
    <property type="entry name" value="DDH_dom"/>
</dbReference>
<dbReference type="InterPro" id="IPR038763">
    <property type="entry name" value="DHH_sf"/>
</dbReference>
<dbReference type="InterPro" id="IPR004097">
    <property type="entry name" value="DHHA2"/>
</dbReference>
<dbReference type="InterPro" id="IPR038222">
    <property type="entry name" value="DHHA2_dom_sf"/>
</dbReference>
<dbReference type="InterPro" id="IPR022934">
    <property type="entry name" value="Mn-dep_inorganic_PyrPase"/>
</dbReference>
<dbReference type="InterPro" id="IPR051319">
    <property type="entry name" value="Oligoribo/pAp-PDE_c-di-AMP_PDE"/>
</dbReference>
<dbReference type="NCBIfam" id="NF003877">
    <property type="entry name" value="PRK05427.1"/>
    <property type="match status" value="1"/>
</dbReference>
<dbReference type="PANTHER" id="PTHR47618">
    <property type="entry name" value="BIFUNCTIONAL OLIGORIBONUCLEASE AND PAP PHOSPHATASE NRNA"/>
    <property type="match status" value="1"/>
</dbReference>
<dbReference type="PANTHER" id="PTHR47618:SF1">
    <property type="entry name" value="BIFUNCTIONAL OLIGORIBONUCLEASE AND PAP PHOSPHATASE NRNA"/>
    <property type="match status" value="1"/>
</dbReference>
<dbReference type="Pfam" id="PF01368">
    <property type="entry name" value="DHH"/>
    <property type="match status" value="1"/>
</dbReference>
<dbReference type="Pfam" id="PF02833">
    <property type="entry name" value="DHHA2"/>
    <property type="match status" value="1"/>
</dbReference>
<dbReference type="SMART" id="SM01131">
    <property type="entry name" value="DHHA2"/>
    <property type="match status" value="1"/>
</dbReference>
<dbReference type="SUPFAM" id="SSF64182">
    <property type="entry name" value="DHH phosphoesterases"/>
    <property type="match status" value="1"/>
</dbReference>
<accession>Q8E4D4</accession>
<comment type="catalytic activity">
    <reaction evidence="1">
        <text>diphosphate + H2O = 2 phosphate + H(+)</text>
        <dbReference type="Rhea" id="RHEA:24576"/>
        <dbReference type="ChEBI" id="CHEBI:15377"/>
        <dbReference type="ChEBI" id="CHEBI:15378"/>
        <dbReference type="ChEBI" id="CHEBI:33019"/>
        <dbReference type="ChEBI" id="CHEBI:43474"/>
        <dbReference type="EC" id="3.6.1.1"/>
    </reaction>
</comment>
<comment type="cofactor">
    <cofactor evidence="1">
        <name>Mn(2+)</name>
        <dbReference type="ChEBI" id="CHEBI:29035"/>
    </cofactor>
    <text evidence="1">Binds 2 manganese ions per subunit.</text>
</comment>
<comment type="subcellular location">
    <subcellularLocation>
        <location evidence="1">Cytoplasm</location>
    </subcellularLocation>
</comment>
<comment type="similarity">
    <text evidence="1">Belongs to the PPase class C family.</text>
</comment>
<evidence type="ECO:0000255" key="1">
    <source>
        <dbReference type="HAMAP-Rule" id="MF_00207"/>
    </source>
</evidence>